<name>CMOB_HELP2</name>
<comment type="function">
    <text evidence="1">Catalyzes carboxymethyl transfer from carboxy-S-adenosyl-L-methionine (Cx-SAM) to 5-hydroxyuridine (ho5U) to form 5-carboxymethoxyuridine (cmo5U) at position 34 in tRNAs.</text>
</comment>
<comment type="catalytic activity">
    <reaction evidence="1">
        <text>carboxy-S-adenosyl-L-methionine + 5-hydroxyuridine(34) in tRNA = 5-carboxymethoxyuridine(34) in tRNA + S-adenosyl-L-homocysteine + H(+)</text>
        <dbReference type="Rhea" id="RHEA:52848"/>
        <dbReference type="Rhea" id="RHEA-COMP:13381"/>
        <dbReference type="Rhea" id="RHEA-COMP:13383"/>
        <dbReference type="ChEBI" id="CHEBI:15378"/>
        <dbReference type="ChEBI" id="CHEBI:57856"/>
        <dbReference type="ChEBI" id="CHEBI:134278"/>
        <dbReference type="ChEBI" id="CHEBI:136877"/>
        <dbReference type="ChEBI" id="CHEBI:136879"/>
    </reaction>
</comment>
<comment type="subunit">
    <text evidence="1">Homotetramer.</text>
</comment>
<comment type="similarity">
    <text evidence="1">Belongs to the class I-like SAM-binding methyltransferase superfamily. CmoB family.</text>
</comment>
<organism>
    <name type="scientific">Helicobacter pylori (strain P12)</name>
    <dbReference type="NCBI Taxonomy" id="570508"/>
    <lineage>
        <taxon>Bacteria</taxon>
        <taxon>Pseudomonadati</taxon>
        <taxon>Campylobacterota</taxon>
        <taxon>Epsilonproteobacteria</taxon>
        <taxon>Campylobacterales</taxon>
        <taxon>Helicobacteraceae</taxon>
        <taxon>Helicobacter</taxon>
    </lineage>
</organism>
<protein>
    <recommendedName>
        <fullName evidence="1">tRNA U34 carboxymethyltransferase</fullName>
        <ecNumber evidence="1">2.5.1.-</ecNumber>
    </recommendedName>
</protein>
<proteinExistence type="inferred from homology"/>
<accession>B6JMM9</accession>
<keyword id="KW-0808">Transferase</keyword>
<keyword id="KW-0819">tRNA processing</keyword>
<sequence>MLICNDKFNPKTLLEEIMALRPWRKGPFKISQIKIDSEWDSSIKWDLVKNATPLKDKIVADVGCNNGYYLFKMLEYKPKSLVGFDPGVLVKKQFEFLAPFFDKEKKIIYESLGVEDLHEKYPNAFDVIFCLGVLYHRKSPLEALKALYHALKIKGELVLDTLIIDSPLDIALCPKKTYAKMKNVYFIPSVSVLKGWCERVGFENFEILSVLKTTPKEQRKTDFILGQSLEDFLDKTDPSKTLEGYDAPLRGYFKMLKPSKR</sequence>
<evidence type="ECO:0000255" key="1">
    <source>
        <dbReference type="HAMAP-Rule" id="MF_01590"/>
    </source>
</evidence>
<feature type="chain" id="PRO_0000381859" description="tRNA U34 carboxymethyltransferase">
    <location>
        <begin position="1"/>
        <end position="261"/>
    </location>
</feature>
<feature type="binding site" evidence="1">
    <location>
        <position position="25"/>
    </location>
    <ligand>
        <name>carboxy-S-adenosyl-L-methionine</name>
        <dbReference type="ChEBI" id="CHEBI:134278"/>
    </ligand>
</feature>
<feature type="binding site" evidence="1">
    <location>
        <position position="39"/>
    </location>
    <ligand>
        <name>carboxy-S-adenosyl-L-methionine</name>
        <dbReference type="ChEBI" id="CHEBI:134278"/>
    </ligand>
</feature>
<feature type="binding site" evidence="1">
    <location>
        <position position="44"/>
    </location>
    <ligand>
        <name>carboxy-S-adenosyl-L-methionine</name>
        <dbReference type="ChEBI" id="CHEBI:134278"/>
    </ligand>
</feature>
<feature type="binding site" evidence="1">
    <location>
        <position position="63"/>
    </location>
    <ligand>
        <name>carboxy-S-adenosyl-L-methionine</name>
        <dbReference type="ChEBI" id="CHEBI:134278"/>
    </ligand>
</feature>
<feature type="binding site" evidence="1">
    <location>
        <begin position="114"/>
        <end position="115"/>
    </location>
    <ligand>
        <name>carboxy-S-adenosyl-L-methionine</name>
        <dbReference type="ChEBI" id="CHEBI:134278"/>
    </ligand>
</feature>
<feature type="binding site" evidence="1">
    <location>
        <position position="135"/>
    </location>
    <ligand>
        <name>carboxy-S-adenosyl-L-methionine</name>
        <dbReference type="ChEBI" id="CHEBI:134278"/>
    </ligand>
</feature>
<feature type="binding site" evidence="1">
    <location>
        <position position="250"/>
    </location>
    <ligand>
        <name>carboxy-S-adenosyl-L-methionine</name>
        <dbReference type="ChEBI" id="CHEBI:134278"/>
    </ligand>
</feature>
<reference key="1">
    <citation type="submission" date="2008-10" db="EMBL/GenBank/DDBJ databases">
        <title>The complete genome sequence of Helicobacter pylori strain P12.</title>
        <authorList>
            <person name="Fischer W."/>
            <person name="Windhager L."/>
            <person name="Karnholz A."/>
            <person name="Zeiller M."/>
            <person name="Zimmer R."/>
            <person name="Haas R."/>
        </authorList>
    </citation>
    <scope>NUCLEOTIDE SEQUENCE [LARGE SCALE GENOMIC DNA]</scope>
    <source>
        <strain>P12</strain>
    </source>
</reference>
<gene>
    <name evidence="1" type="primary">cmoB</name>
    <name type="ordered locus">HPP12_1005</name>
</gene>
<dbReference type="EC" id="2.5.1.-" evidence="1"/>
<dbReference type="EMBL" id="CP001217">
    <property type="protein sequence ID" value="ACJ08157.1"/>
    <property type="molecule type" value="Genomic_DNA"/>
</dbReference>
<dbReference type="SMR" id="B6JMM9"/>
<dbReference type="KEGG" id="hpp:HPP12_1005"/>
<dbReference type="HOGENOM" id="CLU_052665_1_0_7"/>
<dbReference type="Proteomes" id="UP000008198">
    <property type="component" value="Chromosome"/>
</dbReference>
<dbReference type="GO" id="GO:0016765">
    <property type="term" value="F:transferase activity, transferring alkyl or aryl (other than methyl) groups"/>
    <property type="evidence" value="ECO:0007669"/>
    <property type="project" value="InterPro"/>
</dbReference>
<dbReference type="GO" id="GO:0002098">
    <property type="term" value="P:tRNA wobble uridine modification"/>
    <property type="evidence" value="ECO:0007669"/>
    <property type="project" value="InterPro"/>
</dbReference>
<dbReference type="CDD" id="cd02440">
    <property type="entry name" value="AdoMet_MTases"/>
    <property type="match status" value="1"/>
</dbReference>
<dbReference type="Gene3D" id="3.40.50.150">
    <property type="entry name" value="Vaccinia Virus protein VP39"/>
    <property type="match status" value="1"/>
</dbReference>
<dbReference type="HAMAP" id="MF_01590">
    <property type="entry name" value="tRNA_carboxymethyltr_CmoB"/>
    <property type="match status" value="1"/>
</dbReference>
<dbReference type="InterPro" id="IPR010017">
    <property type="entry name" value="CmoB"/>
</dbReference>
<dbReference type="InterPro" id="IPR027555">
    <property type="entry name" value="Mo5U34_MeTrfas-like"/>
</dbReference>
<dbReference type="InterPro" id="IPR029063">
    <property type="entry name" value="SAM-dependent_MTases_sf"/>
</dbReference>
<dbReference type="NCBIfam" id="NF011650">
    <property type="entry name" value="PRK15068.1"/>
    <property type="match status" value="1"/>
</dbReference>
<dbReference type="NCBIfam" id="TIGR00452">
    <property type="entry name" value="tRNA 5-methoxyuridine(34)/uridine 5-oxyacetic acid(34) synthase CmoB"/>
    <property type="match status" value="1"/>
</dbReference>
<dbReference type="Pfam" id="PF08003">
    <property type="entry name" value="Methyltransf_9"/>
    <property type="match status" value="1"/>
</dbReference>
<dbReference type="SUPFAM" id="SSF53335">
    <property type="entry name" value="S-adenosyl-L-methionine-dependent methyltransferases"/>
    <property type="match status" value="1"/>
</dbReference>